<keyword id="KW-0378">Hydrolase</keyword>
<protein>
    <recommendedName>
        <fullName evidence="1">Ureidoacrylate amidohydrolase RutB</fullName>
        <ecNumber evidence="1">3.5.1.110</ecNumber>
    </recommendedName>
</protein>
<gene>
    <name evidence="1" type="primary">rutB</name>
    <name type="ordered locus">Mchl_2056</name>
</gene>
<organism>
    <name type="scientific">Methylorubrum extorquens (strain CM4 / NCIMB 13688)</name>
    <name type="common">Methylobacterium extorquens</name>
    <dbReference type="NCBI Taxonomy" id="440085"/>
    <lineage>
        <taxon>Bacteria</taxon>
        <taxon>Pseudomonadati</taxon>
        <taxon>Pseudomonadota</taxon>
        <taxon>Alphaproteobacteria</taxon>
        <taxon>Hyphomicrobiales</taxon>
        <taxon>Methylobacteriaceae</taxon>
        <taxon>Methylorubrum</taxon>
    </lineage>
</organism>
<sequence>MEADAPAGYRDPSGRHGAVTLPARPEPIAFDADTTVLIVVDMQNAYATKGGYLDLAGFDVSATGPVIERIAQAVAAARAAGIRVVWFQNGWDPDYVEAGGPGSPNWHKSNALKTMRRRPEMNQRLLAKGTWDYALVDALTPEPGDIVLPKPRYSGFYNTPLDSMLRARGIRTLVFTGIATNVCVESTLRDGYHREYFGIVLADATHQAGPPALQEGALRNIETFFGWVSDVAAFEAALSSDEARRIPA</sequence>
<accession>B7KWT6</accession>
<reference key="1">
    <citation type="submission" date="2008-12" db="EMBL/GenBank/DDBJ databases">
        <title>Complete sequence of chromosome of Methylobacterium chloromethanicum CM4.</title>
        <authorList>
            <consortium name="US DOE Joint Genome Institute"/>
            <person name="Lucas S."/>
            <person name="Copeland A."/>
            <person name="Lapidus A."/>
            <person name="Glavina del Rio T."/>
            <person name="Dalin E."/>
            <person name="Tice H."/>
            <person name="Bruce D."/>
            <person name="Goodwin L."/>
            <person name="Pitluck S."/>
            <person name="Chertkov O."/>
            <person name="Brettin T."/>
            <person name="Detter J.C."/>
            <person name="Han C."/>
            <person name="Larimer F."/>
            <person name="Land M."/>
            <person name="Hauser L."/>
            <person name="Kyrpides N."/>
            <person name="Mikhailova N."/>
            <person name="Marx C."/>
            <person name="Richardson P."/>
        </authorList>
    </citation>
    <scope>NUCLEOTIDE SEQUENCE [LARGE SCALE GENOMIC DNA]</scope>
    <source>
        <strain>CM4 / NCIMB 13688</strain>
    </source>
</reference>
<name>RUTB_METC4</name>
<feature type="chain" id="PRO_0000402691" description="Ureidoacrylate amidohydrolase RutB">
    <location>
        <begin position="1"/>
        <end position="248"/>
    </location>
</feature>
<feature type="active site" description="Proton acceptor" evidence="1">
    <location>
        <position position="41"/>
    </location>
</feature>
<feature type="active site" evidence="1">
    <location>
        <position position="150"/>
    </location>
</feature>
<feature type="active site" description="Nucleophile" evidence="1">
    <location>
        <position position="183"/>
    </location>
</feature>
<dbReference type="EC" id="3.5.1.110" evidence="1"/>
<dbReference type="EMBL" id="CP001298">
    <property type="protein sequence ID" value="ACK82903.1"/>
    <property type="molecule type" value="Genomic_DNA"/>
</dbReference>
<dbReference type="RefSeq" id="WP_015950623.1">
    <property type="nucleotide sequence ID" value="NC_011757.1"/>
</dbReference>
<dbReference type="SMR" id="B7KWT6"/>
<dbReference type="KEGG" id="mch:Mchl_2056"/>
<dbReference type="HOGENOM" id="CLU_068979_8_0_5"/>
<dbReference type="Proteomes" id="UP000002385">
    <property type="component" value="Chromosome"/>
</dbReference>
<dbReference type="GO" id="GO:0016811">
    <property type="term" value="F:hydrolase activity, acting on carbon-nitrogen (but not peptide) bonds, in linear amides"/>
    <property type="evidence" value="ECO:0007669"/>
    <property type="project" value="UniProtKB-UniRule"/>
</dbReference>
<dbReference type="GO" id="GO:0019740">
    <property type="term" value="P:nitrogen utilization"/>
    <property type="evidence" value="ECO:0007669"/>
    <property type="project" value="UniProtKB-UniRule"/>
</dbReference>
<dbReference type="GO" id="GO:0006212">
    <property type="term" value="P:uracil catabolic process"/>
    <property type="evidence" value="ECO:0007669"/>
    <property type="project" value="UniProtKB-UniRule"/>
</dbReference>
<dbReference type="CDD" id="cd00431">
    <property type="entry name" value="cysteine_hydrolases"/>
    <property type="match status" value="1"/>
</dbReference>
<dbReference type="Gene3D" id="3.40.50.850">
    <property type="entry name" value="Isochorismatase-like"/>
    <property type="match status" value="1"/>
</dbReference>
<dbReference type="HAMAP" id="MF_00830">
    <property type="entry name" value="RutB"/>
    <property type="match status" value="1"/>
</dbReference>
<dbReference type="InterPro" id="IPR000868">
    <property type="entry name" value="Isochorismatase-like_dom"/>
</dbReference>
<dbReference type="InterPro" id="IPR050272">
    <property type="entry name" value="Isochorismatase-like_hydrls"/>
</dbReference>
<dbReference type="InterPro" id="IPR036380">
    <property type="entry name" value="Isochorismatase-like_sf"/>
</dbReference>
<dbReference type="InterPro" id="IPR019916">
    <property type="entry name" value="RutB"/>
</dbReference>
<dbReference type="NCBIfam" id="TIGR03614">
    <property type="entry name" value="RutB"/>
    <property type="match status" value="1"/>
</dbReference>
<dbReference type="PANTHER" id="PTHR43540:SF6">
    <property type="entry name" value="ISOCHORISMATASE-LIKE DOMAIN-CONTAINING PROTEIN"/>
    <property type="match status" value="1"/>
</dbReference>
<dbReference type="PANTHER" id="PTHR43540">
    <property type="entry name" value="PEROXYUREIDOACRYLATE/UREIDOACRYLATE AMIDOHYDROLASE-RELATED"/>
    <property type="match status" value="1"/>
</dbReference>
<dbReference type="Pfam" id="PF00857">
    <property type="entry name" value="Isochorismatase"/>
    <property type="match status" value="1"/>
</dbReference>
<dbReference type="SUPFAM" id="SSF52499">
    <property type="entry name" value="Isochorismatase-like hydrolases"/>
    <property type="match status" value="1"/>
</dbReference>
<evidence type="ECO:0000255" key="1">
    <source>
        <dbReference type="HAMAP-Rule" id="MF_00830"/>
    </source>
</evidence>
<proteinExistence type="inferred from homology"/>
<comment type="function">
    <text evidence="1">Hydrolyzes ureidoacrylate to form aminoacrylate and carbamate. The carbamate hydrolyzes spontaneously, thereby releasing one of the nitrogen atoms of the pyrimidine ring as ammonia and one of its carbon atoms as CO2.</text>
</comment>
<comment type="catalytic activity">
    <reaction evidence="1">
        <text>(Z)-3-ureidoacrylate + H2O + H(+) = (Z)-3-aminoacrylate + NH4(+) + CO2</text>
        <dbReference type="Rhea" id="RHEA:42624"/>
        <dbReference type="ChEBI" id="CHEBI:15377"/>
        <dbReference type="ChEBI" id="CHEBI:15378"/>
        <dbReference type="ChEBI" id="CHEBI:16526"/>
        <dbReference type="ChEBI" id="CHEBI:28938"/>
        <dbReference type="ChEBI" id="CHEBI:59891"/>
        <dbReference type="ChEBI" id="CHEBI:59894"/>
        <dbReference type="EC" id="3.5.1.110"/>
    </reaction>
</comment>
<comment type="catalytic activity">
    <reaction evidence="1">
        <text>(Z)-3-ureidoacrylate + H2O = (Z)-3-aminoacrylate + carbamate + H(+)</text>
        <dbReference type="Rhea" id="RHEA:31603"/>
        <dbReference type="ChEBI" id="CHEBI:13941"/>
        <dbReference type="ChEBI" id="CHEBI:15377"/>
        <dbReference type="ChEBI" id="CHEBI:15378"/>
        <dbReference type="ChEBI" id="CHEBI:59891"/>
        <dbReference type="ChEBI" id="CHEBI:59894"/>
    </reaction>
</comment>
<comment type="catalytic activity">
    <reaction evidence="1">
        <text>(Z)-2-methylureidoacrylate + H2O + H(+) = (Z)-2-methylaminoacrylate + NH4(+) + CO2</text>
        <dbReference type="Rhea" id="RHEA:42620"/>
        <dbReference type="ChEBI" id="CHEBI:15377"/>
        <dbReference type="ChEBI" id="CHEBI:15378"/>
        <dbReference type="ChEBI" id="CHEBI:16526"/>
        <dbReference type="ChEBI" id="CHEBI:28938"/>
        <dbReference type="ChEBI" id="CHEBI:143783"/>
        <dbReference type="ChEBI" id="CHEBI:145735"/>
        <dbReference type="EC" id="3.5.1.110"/>
    </reaction>
</comment>
<comment type="similarity">
    <text evidence="1">Belongs to the isochorismatase family. RutB subfamily.</text>
</comment>